<accession>Q0S4V3</accession>
<organism>
    <name type="scientific">Rhodococcus jostii (strain RHA1)</name>
    <dbReference type="NCBI Taxonomy" id="101510"/>
    <lineage>
        <taxon>Bacteria</taxon>
        <taxon>Bacillati</taxon>
        <taxon>Actinomycetota</taxon>
        <taxon>Actinomycetes</taxon>
        <taxon>Mycobacteriales</taxon>
        <taxon>Nocardiaceae</taxon>
        <taxon>Rhodococcus</taxon>
    </lineage>
</organism>
<reference key="1">
    <citation type="journal article" date="2006" name="Proc. Natl. Acad. Sci. U.S.A.">
        <title>The complete genome of Rhodococcus sp. RHA1 provides insights into a catabolic powerhouse.</title>
        <authorList>
            <person name="McLeod M.P."/>
            <person name="Warren R.L."/>
            <person name="Hsiao W.W.L."/>
            <person name="Araki N."/>
            <person name="Myhre M."/>
            <person name="Fernandes C."/>
            <person name="Miyazawa D."/>
            <person name="Wong W."/>
            <person name="Lillquist A.L."/>
            <person name="Wang D."/>
            <person name="Dosanjh M."/>
            <person name="Hara H."/>
            <person name="Petrescu A."/>
            <person name="Morin R.D."/>
            <person name="Yang G."/>
            <person name="Stott J.M."/>
            <person name="Schein J.E."/>
            <person name="Shin H."/>
            <person name="Smailus D."/>
            <person name="Siddiqui A.S."/>
            <person name="Marra M.A."/>
            <person name="Jones S.J.M."/>
            <person name="Holt R."/>
            <person name="Brinkman F.S.L."/>
            <person name="Miyauchi K."/>
            <person name="Fukuda M."/>
            <person name="Davies J.E."/>
            <person name="Mohn W.W."/>
            <person name="Eltis L.D."/>
        </authorList>
    </citation>
    <scope>NUCLEOTIDE SEQUENCE [LARGE SCALE GENOMIC DNA]</scope>
    <source>
        <strain>RHA1</strain>
    </source>
</reference>
<dbReference type="EC" id="3.5.3.6" evidence="1"/>
<dbReference type="EMBL" id="CP000431">
    <property type="protein sequence ID" value="ABG97433.1"/>
    <property type="molecule type" value="Genomic_DNA"/>
</dbReference>
<dbReference type="RefSeq" id="WP_009478910.1">
    <property type="nucleotide sequence ID" value="NC_008268.1"/>
</dbReference>
<dbReference type="SMR" id="Q0S4V3"/>
<dbReference type="KEGG" id="rha:RHA1_ro05654"/>
<dbReference type="eggNOG" id="COG2235">
    <property type="taxonomic scope" value="Bacteria"/>
</dbReference>
<dbReference type="HOGENOM" id="CLU_052662_0_1_11"/>
<dbReference type="OrthoDB" id="9807502at2"/>
<dbReference type="UniPathway" id="UPA00254">
    <property type="reaction ID" value="UER00364"/>
</dbReference>
<dbReference type="Proteomes" id="UP000008710">
    <property type="component" value="Chromosome"/>
</dbReference>
<dbReference type="GO" id="GO:0005737">
    <property type="term" value="C:cytoplasm"/>
    <property type="evidence" value="ECO:0007669"/>
    <property type="project" value="UniProtKB-SubCell"/>
</dbReference>
<dbReference type="GO" id="GO:0016990">
    <property type="term" value="F:arginine deiminase activity"/>
    <property type="evidence" value="ECO:0007669"/>
    <property type="project" value="UniProtKB-UniRule"/>
</dbReference>
<dbReference type="GO" id="GO:0019547">
    <property type="term" value="P:arginine catabolic process to ornithine"/>
    <property type="evidence" value="ECO:0007669"/>
    <property type="project" value="UniProtKB-UniRule"/>
</dbReference>
<dbReference type="GO" id="GO:0019546">
    <property type="term" value="P:arginine deiminase pathway"/>
    <property type="evidence" value="ECO:0007669"/>
    <property type="project" value="TreeGrafter"/>
</dbReference>
<dbReference type="Gene3D" id="1.10.3930.10">
    <property type="entry name" value="Arginine deiminase"/>
    <property type="match status" value="1"/>
</dbReference>
<dbReference type="Gene3D" id="3.75.10.10">
    <property type="entry name" value="L-arginine/glycine Amidinotransferase, Chain A"/>
    <property type="match status" value="1"/>
</dbReference>
<dbReference type="HAMAP" id="MF_00242">
    <property type="entry name" value="Arg_deiminase"/>
    <property type="match status" value="1"/>
</dbReference>
<dbReference type="InterPro" id="IPR003876">
    <property type="entry name" value="Arg_deiminase"/>
</dbReference>
<dbReference type="NCBIfam" id="TIGR01078">
    <property type="entry name" value="arcA"/>
    <property type="match status" value="1"/>
</dbReference>
<dbReference type="NCBIfam" id="NF002381">
    <property type="entry name" value="PRK01388.1"/>
    <property type="match status" value="1"/>
</dbReference>
<dbReference type="PANTHER" id="PTHR47271">
    <property type="entry name" value="ARGININE DEIMINASE"/>
    <property type="match status" value="1"/>
</dbReference>
<dbReference type="PANTHER" id="PTHR47271:SF2">
    <property type="entry name" value="ARGININE DEIMINASE"/>
    <property type="match status" value="1"/>
</dbReference>
<dbReference type="Pfam" id="PF02274">
    <property type="entry name" value="ADI"/>
    <property type="match status" value="1"/>
</dbReference>
<dbReference type="PIRSF" id="PIRSF006356">
    <property type="entry name" value="Arg_deiminase"/>
    <property type="match status" value="1"/>
</dbReference>
<dbReference type="PRINTS" id="PR01466">
    <property type="entry name" value="ARGDEIMINASE"/>
</dbReference>
<dbReference type="SUPFAM" id="SSF55909">
    <property type="entry name" value="Pentein"/>
    <property type="match status" value="1"/>
</dbReference>
<sequence length="405" mass="43135">MNASGSAPLGANSEVGQLRAVLLHRPGDELKRLTPRNNDQLLFDGLPWVDRAQEEHDAFADLLRSRGVEVLLLSDLLTETLGASGAARIQGIGAAVDARKLGHTLAQELAAHLRGVPAPDLSTILTAGMTFDELPVAANTASLVRRMHHGGDFVIDPLPNLLFTRDSSFWIGPRVAITSLALPARVRETSLTDIIYAHHPRFRGARRAYESHTAPVEGGDVLLLAPGVVAVGVGERTTPAGAEALARSVFEDELAHTVLVVPIAQARASMHLDTVCTMVDHDAVVMYPIIQDTLSAFTIHREDKGVSIRGADPFLTAAAEAMGIGKLRVIDTGLDNVTAEREQWDDGNNTLALAPGVVVAYERNVETNARLEASGIEVLRIAGSELGSGRGGPRCMSCPVARDPL</sequence>
<gene>
    <name evidence="1" type="primary">arcA</name>
    <name type="ordered locus">RHA1_ro05654</name>
</gene>
<keyword id="KW-0056">Arginine metabolism</keyword>
<keyword id="KW-0963">Cytoplasm</keyword>
<keyword id="KW-0378">Hydrolase</keyword>
<evidence type="ECO:0000255" key="1">
    <source>
        <dbReference type="HAMAP-Rule" id="MF_00242"/>
    </source>
</evidence>
<feature type="chain" id="PRO_0000336673" description="Arginine deiminase">
    <location>
        <begin position="1"/>
        <end position="405"/>
    </location>
</feature>
<feature type="active site" description="Amidino-cysteine intermediate" evidence="1">
    <location>
        <position position="395"/>
    </location>
</feature>
<protein>
    <recommendedName>
        <fullName evidence="1">Arginine deiminase</fullName>
        <shortName evidence="1">ADI</shortName>
        <ecNumber evidence="1">3.5.3.6</ecNumber>
    </recommendedName>
    <alternativeName>
        <fullName evidence="1">Arginine dihydrolase</fullName>
        <shortName evidence="1">AD</shortName>
    </alternativeName>
</protein>
<proteinExistence type="inferred from homology"/>
<name>ARCA_RHOJR</name>
<comment type="catalytic activity">
    <reaction evidence="1">
        <text>L-arginine + H2O = L-citrulline + NH4(+)</text>
        <dbReference type="Rhea" id="RHEA:19597"/>
        <dbReference type="ChEBI" id="CHEBI:15377"/>
        <dbReference type="ChEBI" id="CHEBI:28938"/>
        <dbReference type="ChEBI" id="CHEBI:32682"/>
        <dbReference type="ChEBI" id="CHEBI:57743"/>
        <dbReference type="EC" id="3.5.3.6"/>
    </reaction>
</comment>
<comment type="pathway">
    <text evidence="1">Amino-acid degradation; L-arginine degradation via ADI pathway; carbamoyl phosphate from L-arginine: step 1/2.</text>
</comment>
<comment type="subcellular location">
    <subcellularLocation>
        <location evidence="1">Cytoplasm</location>
    </subcellularLocation>
</comment>
<comment type="similarity">
    <text evidence="1">Belongs to the arginine deiminase family.</text>
</comment>